<feature type="chain" id="PRO_0000146098" description="DNA-directed RNA polymerase subunit Rpo5">
    <location>
        <begin position="1"/>
        <end position="82"/>
    </location>
</feature>
<accession>Q9V116</accession>
<accession>G8ZJ78</accession>
<name>RPO5_PYRAB</name>
<organism>
    <name type="scientific">Pyrococcus abyssi (strain GE5 / Orsay)</name>
    <dbReference type="NCBI Taxonomy" id="272844"/>
    <lineage>
        <taxon>Archaea</taxon>
        <taxon>Methanobacteriati</taxon>
        <taxon>Methanobacteriota</taxon>
        <taxon>Thermococci</taxon>
        <taxon>Thermococcales</taxon>
        <taxon>Thermococcaceae</taxon>
        <taxon>Pyrococcus</taxon>
    </lineage>
</organism>
<evidence type="ECO:0000255" key="1">
    <source>
        <dbReference type="HAMAP-Rule" id="MF_00025"/>
    </source>
</evidence>
<sequence>MAGKSEFNIFKHVLVPEHRILSEEEKKALLEKYRITPAQLPQIKASDPAVKALGAKPGDIIEIKRKSPTAGVYYYYRVVVED</sequence>
<protein>
    <recommendedName>
        <fullName evidence="1">DNA-directed RNA polymerase subunit Rpo5</fullName>
        <ecNumber evidence="1">2.7.7.6</ecNumber>
    </recommendedName>
    <alternativeName>
        <fullName evidence="1">DNA-directed RNA polymerase subunit H</fullName>
    </alternativeName>
</protein>
<comment type="function">
    <text evidence="1">DNA-dependent RNA polymerase (RNAP) catalyzes the transcription of DNA into RNA using the four ribonucleoside triphosphates as substrates.</text>
</comment>
<comment type="catalytic activity">
    <reaction evidence="1">
        <text>RNA(n) + a ribonucleoside 5'-triphosphate = RNA(n+1) + diphosphate</text>
        <dbReference type="Rhea" id="RHEA:21248"/>
        <dbReference type="Rhea" id="RHEA-COMP:14527"/>
        <dbReference type="Rhea" id="RHEA-COMP:17342"/>
        <dbReference type="ChEBI" id="CHEBI:33019"/>
        <dbReference type="ChEBI" id="CHEBI:61557"/>
        <dbReference type="ChEBI" id="CHEBI:140395"/>
        <dbReference type="EC" id="2.7.7.6"/>
    </reaction>
</comment>
<comment type="subunit">
    <text evidence="1">Part of the RNA polymerase complex.</text>
</comment>
<comment type="subcellular location">
    <subcellularLocation>
        <location evidence="1">Cytoplasm</location>
    </subcellularLocation>
</comment>
<comment type="similarity">
    <text evidence="1">Belongs to the archaeal Rpo5/eukaryotic RPB5 RNA polymerase subunit family.</text>
</comment>
<keyword id="KW-0963">Cytoplasm</keyword>
<keyword id="KW-0240">DNA-directed RNA polymerase</keyword>
<keyword id="KW-0548">Nucleotidyltransferase</keyword>
<keyword id="KW-0804">Transcription</keyword>
<keyword id="KW-0808">Transferase</keyword>
<gene>
    <name evidence="1" type="primary">rpo5</name>
    <name evidence="1" type="synonym">rpoH</name>
    <name type="ordered locus">PYRAB06130</name>
    <name type="ORF">PAB7151</name>
</gene>
<proteinExistence type="inferred from homology"/>
<dbReference type="EC" id="2.7.7.6" evidence="1"/>
<dbReference type="EMBL" id="AJ248284">
    <property type="protein sequence ID" value="CAB49535.1"/>
    <property type="molecule type" value="Genomic_DNA"/>
</dbReference>
<dbReference type="EMBL" id="HE613800">
    <property type="protein sequence ID" value="CCE70005.1"/>
    <property type="molecule type" value="Genomic_DNA"/>
</dbReference>
<dbReference type="PIR" id="H75181">
    <property type="entry name" value="H75181"/>
</dbReference>
<dbReference type="RefSeq" id="WP_010867737.1">
    <property type="nucleotide sequence ID" value="NC_000868.1"/>
</dbReference>
<dbReference type="SMR" id="Q9V116"/>
<dbReference type="STRING" id="272844.PAB7151"/>
<dbReference type="KEGG" id="pab:PAB7151"/>
<dbReference type="PATRIC" id="fig|272844.11.peg.651"/>
<dbReference type="eggNOG" id="arCOG04258">
    <property type="taxonomic scope" value="Archaea"/>
</dbReference>
<dbReference type="HOGENOM" id="CLU_058320_4_0_2"/>
<dbReference type="OrthoDB" id="30537at2157"/>
<dbReference type="PhylomeDB" id="Q9V116"/>
<dbReference type="Proteomes" id="UP000000810">
    <property type="component" value="Chromosome"/>
</dbReference>
<dbReference type="Proteomes" id="UP000009139">
    <property type="component" value="Chromosome"/>
</dbReference>
<dbReference type="GO" id="GO:0005737">
    <property type="term" value="C:cytoplasm"/>
    <property type="evidence" value="ECO:0007669"/>
    <property type="project" value="UniProtKB-SubCell"/>
</dbReference>
<dbReference type="GO" id="GO:0000428">
    <property type="term" value="C:DNA-directed RNA polymerase complex"/>
    <property type="evidence" value="ECO:0007669"/>
    <property type="project" value="UniProtKB-KW"/>
</dbReference>
<dbReference type="GO" id="GO:0003677">
    <property type="term" value="F:DNA binding"/>
    <property type="evidence" value="ECO:0007669"/>
    <property type="project" value="InterPro"/>
</dbReference>
<dbReference type="GO" id="GO:0003899">
    <property type="term" value="F:DNA-directed RNA polymerase activity"/>
    <property type="evidence" value="ECO:0007669"/>
    <property type="project" value="UniProtKB-UniRule"/>
</dbReference>
<dbReference type="GO" id="GO:0006366">
    <property type="term" value="P:transcription by RNA polymerase II"/>
    <property type="evidence" value="ECO:0007669"/>
    <property type="project" value="TreeGrafter"/>
</dbReference>
<dbReference type="GO" id="GO:0006362">
    <property type="term" value="P:transcription elongation by RNA polymerase I"/>
    <property type="evidence" value="ECO:0007669"/>
    <property type="project" value="TreeGrafter"/>
</dbReference>
<dbReference type="GO" id="GO:0042797">
    <property type="term" value="P:tRNA transcription by RNA polymerase III"/>
    <property type="evidence" value="ECO:0007669"/>
    <property type="project" value="TreeGrafter"/>
</dbReference>
<dbReference type="FunFam" id="3.90.940.20:FF:000001">
    <property type="entry name" value="DNA-directed RNA polymerases I, II, and III subunit RPABC1"/>
    <property type="match status" value="1"/>
</dbReference>
<dbReference type="Gene3D" id="3.90.940.20">
    <property type="entry name" value="RPB5-like RNA polymerase subunit"/>
    <property type="match status" value="1"/>
</dbReference>
<dbReference type="HAMAP" id="MF_00025">
    <property type="entry name" value="RNApol_Rpo5_RPB5"/>
    <property type="match status" value="1"/>
</dbReference>
<dbReference type="InterPro" id="IPR014381">
    <property type="entry name" value="Arch_Rpo5/euc_Rpb5"/>
</dbReference>
<dbReference type="InterPro" id="IPR000783">
    <property type="entry name" value="RNA_pol_subH/Rpb5_C"/>
</dbReference>
<dbReference type="InterPro" id="IPR020608">
    <property type="entry name" value="RNA_pol_subH/Rpb5_CS"/>
</dbReference>
<dbReference type="InterPro" id="IPR035913">
    <property type="entry name" value="RPB5-like_sf"/>
</dbReference>
<dbReference type="NCBIfam" id="NF007129">
    <property type="entry name" value="PRK09570.1"/>
    <property type="match status" value="1"/>
</dbReference>
<dbReference type="PANTHER" id="PTHR10535">
    <property type="entry name" value="DNA-DIRECTED RNA POLYMERASES I, II, AND III SUBUNIT RPABC1"/>
    <property type="match status" value="1"/>
</dbReference>
<dbReference type="PANTHER" id="PTHR10535:SF0">
    <property type="entry name" value="DNA-DIRECTED RNA POLYMERASES I, II, AND III SUBUNIT RPABC1"/>
    <property type="match status" value="1"/>
</dbReference>
<dbReference type="Pfam" id="PF01191">
    <property type="entry name" value="RNA_pol_Rpb5_C"/>
    <property type="match status" value="1"/>
</dbReference>
<dbReference type="SUPFAM" id="SSF55287">
    <property type="entry name" value="RPB5-like RNA polymerase subunit"/>
    <property type="match status" value="1"/>
</dbReference>
<dbReference type="PROSITE" id="PS01110">
    <property type="entry name" value="RNA_POL_H_23KD"/>
    <property type="match status" value="1"/>
</dbReference>
<reference key="1">
    <citation type="journal article" date="2003" name="Mol. Microbiol.">
        <title>An integrated analysis of the genome of the hyperthermophilic archaeon Pyrococcus abyssi.</title>
        <authorList>
            <person name="Cohen G.N."/>
            <person name="Barbe V."/>
            <person name="Flament D."/>
            <person name="Galperin M."/>
            <person name="Heilig R."/>
            <person name="Lecompte O."/>
            <person name="Poch O."/>
            <person name="Prieur D."/>
            <person name="Querellou J."/>
            <person name="Ripp R."/>
            <person name="Thierry J.-C."/>
            <person name="Van der Oost J."/>
            <person name="Weissenbach J."/>
            <person name="Zivanovic Y."/>
            <person name="Forterre P."/>
        </authorList>
    </citation>
    <scope>NUCLEOTIDE SEQUENCE [LARGE SCALE GENOMIC DNA]</scope>
    <source>
        <strain>GE5 / Orsay</strain>
    </source>
</reference>
<reference key="2">
    <citation type="journal article" date="2012" name="Curr. Microbiol.">
        <title>Re-annotation of two hyperthermophilic archaea Pyrococcus abyssi GE5 and Pyrococcus furiosus DSM 3638.</title>
        <authorList>
            <person name="Gao J."/>
            <person name="Wang J."/>
        </authorList>
    </citation>
    <scope>GENOME REANNOTATION</scope>
    <source>
        <strain>GE5 / Orsay</strain>
    </source>
</reference>